<accession>Q10021</accession>
<accession>Q95ZN0</accession>
<accession>Q95ZN1</accession>
<accession>Q95ZN2</accession>
<organism>
    <name type="scientific">Caenorhabditis elegans</name>
    <dbReference type="NCBI Taxonomy" id="6239"/>
    <lineage>
        <taxon>Eukaryota</taxon>
        <taxon>Metazoa</taxon>
        <taxon>Ecdysozoa</taxon>
        <taxon>Nematoda</taxon>
        <taxon>Chromadorea</taxon>
        <taxon>Rhabditida</taxon>
        <taxon>Rhabditina</taxon>
        <taxon>Rhabditomorpha</taxon>
        <taxon>Rhabditoidea</taxon>
        <taxon>Rhabditidae</taxon>
        <taxon>Peloderinae</taxon>
        <taxon>Caenorhabditis</taxon>
    </lineage>
</organism>
<comment type="function">
    <text evidence="4 5">Plays a functionally redundant role in shifting germ cell sexual differentiation in hermaphrodites.</text>
</comment>
<comment type="subcellular location">
    <subcellularLocation>
        <location evidence="5">Nucleus</location>
    </subcellularLocation>
</comment>
<comment type="alternative products">
    <event type="alternative splicing"/>
    <isoform>
        <id>Q10021-1</id>
        <name>a</name>
        <sequence type="displayed"/>
    </isoform>
    <isoform>
        <id>Q10021-2</id>
        <name>b</name>
        <sequence type="described" ref="VSP_005908 VSP_005910"/>
    </isoform>
    <isoform>
        <id>Q10021-3</id>
        <name>c</name>
        <sequence type="described" ref="VSP_005906 VSP_005907"/>
    </isoform>
    <isoform>
        <id>Q10021-4</id>
        <name>d</name>
        <sequence type="described" ref="VSP_005909"/>
    </isoform>
</comment>
<comment type="PTM">
    <text evidence="1">Extensively phosphorylated on serine residues in the RS domain.</text>
</comment>
<comment type="miscellaneous">
    <text>RNA-mediated interference (RNAi) of rsp-5/rsp-6 resulted in fertile animals that exhibit excessive sperm and delayed oocyte production, and sterile animals that develop morphological abnormalities of somatic gonads.</text>
</comment>
<comment type="similarity">
    <text evidence="6">Belongs to the splicing factor SR family.</text>
</comment>
<proteinExistence type="inferred from homology"/>
<gene>
    <name type="primary">rsp-5</name>
    <name type="synonym">srp-3</name>
    <name type="ORF">T28D9.2</name>
</gene>
<feature type="chain" id="PRO_0000081952" description="Probable splicing factor, arginine/serine-rich 5">
    <location>
        <begin position="1"/>
        <end position="208"/>
    </location>
</feature>
<feature type="domain" description="RRM" evidence="2">
    <location>
        <begin position="2"/>
        <end position="74"/>
    </location>
</feature>
<feature type="region of interest" description="Disordered" evidence="3">
    <location>
        <begin position="71"/>
        <end position="208"/>
    </location>
</feature>
<feature type="compositionally biased region" description="Basic residues" evidence="3">
    <location>
        <begin position="84"/>
        <end position="123"/>
    </location>
</feature>
<feature type="compositionally biased region" description="Basic and acidic residues" evidence="3">
    <location>
        <begin position="128"/>
        <end position="153"/>
    </location>
</feature>
<feature type="splice variant" id="VSP_005906" description="In isoform c." evidence="6">
    <original>MPRLYLGKIPYNARERDVERFLKGYGKINNISMKYGFAFVDFEDSRDAEDACHDLDGKTMEGSSMRLVVEMARGKPRGNDRHGSRSPRRRSRSPRRRSRTPPRRRSRSRDRKRSRRSRSRSSSRSRSP</original>
    <variation>MLKTHAMIWMEKPWKEALCALSWKWLAENHAAMTVMDRDHHDDVPALLDVVHVLHQEDVPALVIANVLADPVPEAPPDPDHQFVKVVAEANPVRRARKETLWVNYQYISIHFSFSPHSYQKPLFRLKE</variation>
    <location>
        <begin position="1"/>
        <end position="128"/>
    </location>
</feature>
<feature type="splice variant" id="VSP_005907" description="In isoform c." evidence="6">
    <location>
        <begin position="129"/>
        <end position="147"/>
    </location>
</feature>
<feature type="splice variant" id="VSP_005908" description="In isoform b." evidence="6">
    <original>LKREASRSRSPLPAKDRSRT</original>
    <variation>FHSSMRNQYHLQAHIAMAYT</variation>
    <location>
        <begin position="147"/>
        <end position="166"/>
    </location>
</feature>
<feature type="splice variant" id="VSP_005909" description="In isoform d." evidence="6">
    <original>KREASRSRSPLPAKDRSRTRSGSPPKNGGDRKRSVSRGRSHSRDGSNRSVSRSPSPGSPKD</original>
    <variation>QLRANISVSYSSPLDSDSIKCKNYILGSVKRRDLVHHCQQKIEAEPEVDLPQRTAEIESAA</variation>
    <location>
        <begin position="148"/>
        <end position="208"/>
    </location>
</feature>
<feature type="splice variant" id="VSP_005910" description="In isoform b." evidence="6">
    <location>
        <begin position="167"/>
        <end position="208"/>
    </location>
</feature>
<sequence length="208" mass="23980">MPRLYLGKIPYNARERDVERFLKGYGKINNISMKYGFAFVDFEDSRDAEDACHDLDGKTMEGSSMRLVVEMARGKPRGNDRHGSRSPRRRSRSPRRRSRTPPRRRSRSRDRKRSRRSRSRSSSRSRSPVRESRRRSESRSPSPKRDLKREASRSRSPLPAKDRSRTRSGSPPKNGGDRKRSVSRGRSHSRDGSNRSVSRSPSPGSPKD</sequence>
<keyword id="KW-0025">Alternative splicing</keyword>
<keyword id="KW-0221">Differentiation</keyword>
<keyword id="KW-0507">mRNA processing</keyword>
<keyword id="KW-0508">mRNA splicing</keyword>
<keyword id="KW-0539">Nucleus</keyword>
<keyword id="KW-0597">Phosphoprotein</keyword>
<keyword id="KW-1185">Reference proteome</keyword>
<keyword id="KW-0694">RNA-binding</keyword>
<keyword id="KW-0726">Sexual differentiation</keyword>
<reference key="1">
    <citation type="journal article" date="1998" name="Science">
        <title>Genome sequence of the nematode C. elegans: a platform for investigating biology.</title>
        <authorList>
            <consortium name="The C. elegans sequencing consortium"/>
        </authorList>
    </citation>
    <scope>NUCLEOTIDE SEQUENCE [LARGE SCALE GENOMIC DNA]</scope>
    <scope>ALTERNATIVE SPLICING</scope>
    <source>
        <strain>Bristol N2</strain>
    </source>
</reference>
<reference key="2">
    <citation type="journal article" date="2000" name="EMBO J.">
        <title>Functional characterization of SR and SR-related genes in Caenorhabditis elegans.</title>
        <authorList>
            <person name="Longman D."/>
            <person name="Johnstone I.L."/>
            <person name="Caceres J.F."/>
        </authorList>
    </citation>
    <scope>IDENTIFICATION</scope>
    <scope>FUNCTION</scope>
</reference>
<reference key="3">
    <citation type="journal article" date="2000" name="Mech. Dev.">
        <title>Unique and redundant functions of SR proteins, a conserved family of splicing factors, in Caenorhabditis elegans development.</title>
        <authorList>
            <person name="Kawano T."/>
            <person name="Fujita M."/>
            <person name="Sakamoto H."/>
        </authorList>
    </citation>
    <scope>FUNCTION</scope>
    <scope>SUBCELLULAR LOCATION</scope>
</reference>
<protein>
    <recommendedName>
        <fullName>Probable splicing factor, arginine/serine-rich 5</fullName>
    </recommendedName>
    <alternativeName>
        <fullName>CeSC35-2</fullName>
    </alternativeName>
    <alternativeName>
        <fullName>RNA-binding protein srp-3</fullName>
    </alternativeName>
</protein>
<evidence type="ECO:0000250" key="1"/>
<evidence type="ECO:0000255" key="2">
    <source>
        <dbReference type="PROSITE-ProRule" id="PRU00176"/>
    </source>
</evidence>
<evidence type="ECO:0000256" key="3">
    <source>
        <dbReference type="SAM" id="MobiDB-lite"/>
    </source>
</evidence>
<evidence type="ECO:0000269" key="4">
    <source>
    </source>
</evidence>
<evidence type="ECO:0000269" key="5">
    <source>
    </source>
</evidence>
<evidence type="ECO:0000305" key="6"/>
<dbReference type="EMBL" id="FO081595">
    <property type="protein sequence ID" value="CCD72697.1"/>
    <property type="molecule type" value="Genomic_DNA"/>
</dbReference>
<dbReference type="EMBL" id="FO081595">
    <property type="protein sequence ID" value="CCD72698.1"/>
    <property type="molecule type" value="Genomic_DNA"/>
</dbReference>
<dbReference type="EMBL" id="FO081595">
    <property type="protein sequence ID" value="CCD72699.1"/>
    <property type="molecule type" value="Genomic_DNA"/>
</dbReference>
<dbReference type="EMBL" id="FO081595">
    <property type="protein sequence ID" value="CCD72700.1"/>
    <property type="molecule type" value="Genomic_DNA"/>
</dbReference>
<dbReference type="PIR" id="T16953">
    <property type="entry name" value="T16953"/>
</dbReference>
<dbReference type="RefSeq" id="NP_001360098.1">
    <molecule id="Q10021-2"/>
    <property type="nucleotide sequence ID" value="NM_001373731.2"/>
</dbReference>
<dbReference type="RefSeq" id="NP_495307.3">
    <molecule id="Q10021-1"/>
    <property type="nucleotide sequence ID" value="NM_062906.6"/>
</dbReference>
<dbReference type="RefSeq" id="NP_495309.3">
    <property type="nucleotide sequence ID" value="NM_062908.4"/>
</dbReference>
<dbReference type="SMR" id="Q10021"/>
<dbReference type="FunCoup" id="Q10021">
    <property type="interactions" value="1221"/>
</dbReference>
<dbReference type="IntAct" id="Q10021">
    <property type="interactions" value="1"/>
</dbReference>
<dbReference type="STRING" id="6239.T28D9.2a.1"/>
<dbReference type="iPTMnet" id="Q10021"/>
<dbReference type="PaxDb" id="6239-T28D9.2a"/>
<dbReference type="PeptideAtlas" id="Q10021"/>
<dbReference type="EnsemblMetazoa" id="T28D9.2a.1">
    <molecule id="Q10021-1"/>
    <property type="protein sequence ID" value="T28D9.2a.1"/>
    <property type="gene ID" value="WBGene00004702"/>
</dbReference>
<dbReference type="EnsemblMetazoa" id="T28D9.2b.1">
    <molecule id="Q10021-2"/>
    <property type="protein sequence ID" value="T28D9.2b.1"/>
    <property type="gene ID" value="WBGene00004702"/>
</dbReference>
<dbReference type="EnsemblMetazoa" id="T28D9.2b.2">
    <molecule id="Q10021-2"/>
    <property type="protein sequence ID" value="T28D9.2b.2"/>
    <property type="gene ID" value="WBGene00004702"/>
</dbReference>
<dbReference type="EnsemblMetazoa" id="T28D9.2b.3">
    <molecule id="Q10021-2"/>
    <property type="protein sequence ID" value="T28D9.2b.3"/>
    <property type="gene ID" value="WBGene00004702"/>
</dbReference>
<dbReference type="EnsemblMetazoa" id="T28D9.2b.4">
    <molecule id="Q10021-2"/>
    <property type="protein sequence ID" value="T28D9.2b.4"/>
    <property type="gene ID" value="WBGene00004702"/>
</dbReference>
<dbReference type="GeneID" id="174073"/>
<dbReference type="KEGG" id="cel:CELE_T28D9.2"/>
<dbReference type="UCSC" id="T28D9.2d">
    <molecule id="Q10021-1"/>
    <property type="organism name" value="c. elegans"/>
</dbReference>
<dbReference type="AGR" id="WB:WBGene00004702"/>
<dbReference type="CTD" id="174073"/>
<dbReference type="WormBase" id="T28D9.2a">
    <molecule id="Q10021-1"/>
    <property type="protein sequence ID" value="CE36572"/>
    <property type="gene ID" value="WBGene00004702"/>
    <property type="gene designation" value="rsp-5"/>
</dbReference>
<dbReference type="WormBase" id="T28D9.2b">
    <molecule id="Q10021-2"/>
    <property type="protein sequence ID" value="CE36573"/>
    <property type="gene ID" value="WBGene00004702"/>
    <property type="gene designation" value="rsp-5"/>
</dbReference>
<dbReference type="eggNOG" id="KOG0106">
    <property type="taxonomic scope" value="Eukaryota"/>
</dbReference>
<dbReference type="HOGENOM" id="CLU_1344302_0_0_1"/>
<dbReference type="InParanoid" id="Q10021"/>
<dbReference type="OMA" id="MRIVVEM"/>
<dbReference type="OrthoDB" id="1099063at2759"/>
<dbReference type="PRO" id="PR:Q10021"/>
<dbReference type="Proteomes" id="UP000001940">
    <property type="component" value="Chromosome II"/>
</dbReference>
<dbReference type="Bgee" id="WBGene00004702">
    <property type="expression patterns" value="Expressed in germ line (C elegans) and 4 other cell types or tissues"/>
</dbReference>
<dbReference type="GO" id="GO:0016607">
    <property type="term" value="C:nuclear speck"/>
    <property type="evidence" value="ECO:0000318"/>
    <property type="project" value="GO_Central"/>
</dbReference>
<dbReference type="GO" id="GO:0005634">
    <property type="term" value="C:nucleus"/>
    <property type="evidence" value="ECO:0000314"/>
    <property type="project" value="UniProtKB"/>
</dbReference>
<dbReference type="GO" id="GO:0003729">
    <property type="term" value="F:mRNA binding"/>
    <property type="evidence" value="ECO:0000318"/>
    <property type="project" value="GO_Central"/>
</dbReference>
<dbReference type="GO" id="GO:0003723">
    <property type="term" value="F:RNA binding"/>
    <property type="evidence" value="ECO:0000250"/>
    <property type="project" value="WormBase"/>
</dbReference>
<dbReference type="GO" id="GO:0030154">
    <property type="term" value="P:cell differentiation"/>
    <property type="evidence" value="ECO:0007669"/>
    <property type="project" value="UniProtKB-KW"/>
</dbReference>
<dbReference type="GO" id="GO:0045292">
    <property type="term" value="P:mRNA cis splicing, via spliceosome"/>
    <property type="evidence" value="ECO:0000318"/>
    <property type="project" value="GO_Central"/>
</dbReference>
<dbReference type="GO" id="GO:0000398">
    <property type="term" value="P:mRNA splicing, via spliceosome"/>
    <property type="evidence" value="ECO:0000250"/>
    <property type="project" value="WormBase"/>
</dbReference>
<dbReference type="GO" id="GO:0008380">
    <property type="term" value="P:RNA splicing"/>
    <property type="evidence" value="ECO:0000303"/>
    <property type="project" value="UniProtKB"/>
</dbReference>
<dbReference type="GO" id="GO:0007548">
    <property type="term" value="P:sex differentiation"/>
    <property type="evidence" value="ECO:0007669"/>
    <property type="project" value="UniProtKB-KW"/>
</dbReference>
<dbReference type="FunFam" id="3.30.70.330:FF:001009">
    <property type="entry name" value="Protein CBR-RSP-5"/>
    <property type="match status" value="1"/>
</dbReference>
<dbReference type="Gene3D" id="3.30.70.330">
    <property type="match status" value="1"/>
</dbReference>
<dbReference type="InterPro" id="IPR012677">
    <property type="entry name" value="Nucleotide-bd_a/b_plait_sf"/>
</dbReference>
<dbReference type="InterPro" id="IPR035979">
    <property type="entry name" value="RBD_domain_sf"/>
</dbReference>
<dbReference type="InterPro" id="IPR000504">
    <property type="entry name" value="RRM_dom"/>
</dbReference>
<dbReference type="InterPro" id="IPR050907">
    <property type="entry name" value="SRSF"/>
</dbReference>
<dbReference type="PANTHER" id="PTHR23147">
    <property type="entry name" value="SERINE/ARGININE RICH SPLICING FACTOR"/>
    <property type="match status" value="1"/>
</dbReference>
<dbReference type="Pfam" id="PF00076">
    <property type="entry name" value="RRM_1"/>
    <property type="match status" value="1"/>
</dbReference>
<dbReference type="SMART" id="SM00360">
    <property type="entry name" value="RRM"/>
    <property type="match status" value="1"/>
</dbReference>
<dbReference type="SUPFAM" id="SSF54928">
    <property type="entry name" value="RNA-binding domain, RBD"/>
    <property type="match status" value="1"/>
</dbReference>
<dbReference type="PROSITE" id="PS50102">
    <property type="entry name" value="RRM"/>
    <property type="match status" value="1"/>
</dbReference>
<name>RSP5_CAEEL</name>